<feature type="chain" id="PRO_0000143496" description="Maturase K">
    <location>
        <begin position="1"/>
        <end position="507"/>
    </location>
</feature>
<geneLocation type="chloroplast"/>
<name>MATK_LYOFE</name>
<sequence length="507" mass="60583">MEEFKRYLELHRFQQHDFIYPLIFQEYIYALAHGRGLNGSIFFENAGYDNKSSLLIVKRLITHLITQMYQQNHFLFYTNDFNPNKFLGCNTNLYSQMIFEGFAVVVEIPFYLRLLSFLEGKERVKSHNLRSLHSIFPFLEDKFSHLNSLLDILIPHPVHLEILVQTLRYWVKDPSSLHLLRFFLHEYPNWNSLMTPKKSSFSFSKRNQRFFFFLYNFYVCEYESIFVFLRNQSSHLCSTSSETLSERICFYKKIELEEVFTKDFKAILWVFKDPFLHYVRYRGKSILASKDSSLLMNKWKYYLVNIWECYFYIWSQPRRIHINQLSNNSLDFLGYLLSVRLKPSMVRSQMIENSFLIENAIKQFDIIVPITPLVTSLSKAKFCNVLGHPYSKPSWAESSDSDIIERFGRIYRNLSHYHSGSLKKISLYRIKYILRLSCARTLARKHKSTVRSFLKRLGVGLLEEFFTEEEQVFYLTFPRASSTSGKLYQRRIWYLDIFCINDPANHE</sequence>
<gene>
    <name evidence="1" type="primary">matK</name>
</gene>
<proteinExistence type="inferred from homology"/>
<accession>O47129</accession>
<evidence type="ECO:0000255" key="1">
    <source>
        <dbReference type="HAMAP-Rule" id="MF_01390"/>
    </source>
</evidence>
<comment type="function">
    <text evidence="1">Usually encoded in the trnK tRNA gene intron. Probably assists in splicing its own and other chloroplast group II introns.</text>
</comment>
<comment type="subcellular location">
    <subcellularLocation>
        <location>Plastid</location>
        <location>Chloroplast</location>
    </subcellularLocation>
</comment>
<comment type="similarity">
    <text evidence="1">Belongs to the intron maturase 2 family. MatK subfamily.</text>
</comment>
<keyword id="KW-0150">Chloroplast</keyword>
<keyword id="KW-0507">mRNA processing</keyword>
<keyword id="KW-0934">Plastid</keyword>
<keyword id="KW-0694">RNA-binding</keyword>
<keyword id="KW-0819">tRNA processing</keyword>
<dbReference type="EMBL" id="U61312">
    <property type="protein sequence ID" value="AAB93732.1"/>
    <property type="molecule type" value="Genomic_DNA"/>
</dbReference>
<dbReference type="GO" id="GO:0009507">
    <property type="term" value="C:chloroplast"/>
    <property type="evidence" value="ECO:0007669"/>
    <property type="project" value="UniProtKB-SubCell"/>
</dbReference>
<dbReference type="GO" id="GO:0003723">
    <property type="term" value="F:RNA binding"/>
    <property type="evidence" value="ECO:0007669"/>
    <property type="project" value="UniProtKB-KW"/>
</dbReference>
<dbReference type="GO" id="GO:0006397">
    <property type="term" value="P:mRNA processing"/>
    <property type="evidence" value="ECO:0007669"/>
    <property type="project" value="UniProtKB-KW"/>
</dbReference>
<dbReference type="GO" id="GO:0008380">
    <property type="term" value="P:RNA splicing"/>
    <property type="evidence" value="ECO:0007669"/>
    <property type="project" value="UniProtKB-UniRule"/>
</dbReference>
<dbReference type="GO" id="GO:0008033">
    <property type="term" value="P:tRNA processing"/>
    <property type="evidence" value="ECO:0007669"/>
    <property type="project" value="UniProtKB-KW"/>
</dbReference>
<dbReference type="HAMAP" id="MF_01390">
    <property type="entry name" value="MatK"/>
    <property type="match status" value="1"/>
</dbReference>
<dbReference type="InterPro" id="IPR024937">
    <property type="entry name" value="Domain_X"/>
</dbReference>
<dbReference type="InterPro" id="IPR002866">
    <property type="entry name" value="Maturase_MatK"/>
</dbReference>
<dbReference type="InterPro" id="IPR024942">
    <property type="entry name" value="Maturase_MatK_N"/>
</dbReference>
<dbReference type="PANTHER" id="PTHR34811">
    <property type="entry name" value="MATURASE K"/>
    <property type="match status" value="1"/>
</dbReference>
<dbReference type="PANTHER" id="PTHR34811:SF1">
    <property type="entry name" value="MATURASE K"/>
    <property type="match status" value="1"/>
</dbReference>
<dbReference type="Pfam" id="PF01348">
    <property type="entry name" value="Intron_maturas2"/>
    <property type="match status" value="1"/>
</dbReference>
<dbReference type="Pfam" id="PF01824">
    <property type="entry name" value="MatK_N"/>
    <property type="match status" value="1"/>
</dbReference>
<reference key="1">
    <citation type="journal article" date="1997" name="Syst. Bot.">
        <title>Systematics of the Lyonia group (Andromedeae, Ericaceae) and the use of species as terminals in higher-level cladistic analyses.</title>
        <authorList>
            <person name="Kron K.A."/>
            <person name="Judd W.S."/>
        </authorList>
        <dbReference type="AGRICOLA" id="IND21637351"/>
    </citation>
    <scope>NUCLEOTIDE SEQUENCE [GENOMIC DNA]</scope>
</reference>
<protein>
    <recommendedName>
        <fullName evidence="1">Maturase K</fullName>
    </recommendedName>
    <alternativeName>
        <fullName evidence="1">Intron maturase</fullName>
    </alternativeName>
</protein>
<organism>
    <name type="scientific">Lyonia ferruginea</name>
    <name type="common">Rusty staggerbush</name>
    <name type="synonym">Andromeda ferruginea</name>
    <dbReference type="NCBI Taxonomy" id="49150"/>
    <lineage>
        <taxon>Eukaryota</taxon>
        <taxon>Viridiplantae</taxon>
        <taxon>Streptophyta</taxon>
        <taxon>Embryophyta</taxon>
        <taxon>Tracheophyta</taxon>
        <taxon>Spermatophyta</taxon>
        <taxon>Magnoliopsida</taxon>
        <taxon>eudicotyledons</taxon>
        <taxon>Gunneridae</taxon>
        <taxon>Pentapetalae</taxon>
        <taxon>asterids</taxon>
        <taxon>Ericales</taxon>
        <taxon>Ericaceae</taxon>
        <taxon>Vaccinioideae</taxon>
        <taxon>Lyonieae</taxon>
        <taxon>Lyonia</taxon>
    </lineage>
</organism>